<feature type="chain" id="PRO_0000378501" description="Ubiquitin carboxyl-terminal hydrolase 36">
    <location>
        <begin position="1"/>
        <end position="1059"/>
    </location>
</feature>
<feature type="domain" description="USP">
    <location>
        <begin position="168"/>
        <end position="457"/>
    </location>
</feature>
<feature type="region of interest" description="Disordered" evidence="5">
    <location>
        <begin position="22"/>
        <end position="45"/>
    </location>
</feature>
<feature type="region of interest" description="Disordered" evidence="5">
    <location>
        <begin position="102"/>
        <end position="145"/>
    </location>
</feature>
<feature type="region of interest" description="Disordered" evidence="5">
    <location>
        <begin position="464"/>
        <end position="512"/>
    </location>
</feature>
<feature type="region of interest" description="Disordered" evidence="5">
    <location>
        <begin position="554"/>
        <end position="853"/>
    </location>
</feature>
<feature type="region of interest" description="Disordered" evidence="5">
    <location>
        <begin position="941"/>
        <end position="1005"/>
    </location>
</feature>
<feature type="region of interest" description="Disordered" evidence="5">
    <location>
        <begin position="1022"/>
        <end position="1059"/>
    </location>
</feature>
<feature type="compositionally biased region" description="Polar residues" evidence="5">
    <location>
        <begin position="23"/>
        <end position="45"/>
    </location>
</feature>
<feature type="compositionally biased region" description="Low complexity" evidence="5">
    <location>
        <begin position="121"/>
        <end position="138"/>
    </location>
</feature>
<feature type="compositionally biased region" description="Low complexity" evidence="5">
    <location>
        <begin position="479"/>
        <end position="494"/>
    </location>
</feature>
<feature type="compositionally biased region" description="Low complexity" evidence="5">
    <location>
        <begin position="561"/>
        <end position="580"/>
    </location>
</feature>
<feature type="compositionally biased region" description="Polar residues" evidence="5">
    <location>
        <begin position="603"/>
        <end position="615"/>
    </location>
</feature>
<feature type="compositionally biased region" description="Polar residues" evidence="5">
    <location>
        <begin position="673"/>
        <end position="702"/>
    </location>
</feature>
<feature type="compositionally biased region" description="Basic and acidic residues" evidence="5">
    <location>
        <begin position="703"/>
        <end position="720"/>
    </location>
</feature>
<feature type="compositionally biased region" description="Acidic residues" evidence="5">
    <location>
        <begin position="721"/>
        <end position="730"/>
    </location>
</feature>
<feature type="compositionally biased region" description="Low complexity" evidence="5">
    <location>
        <begin position="740"/>
        <end position="750"/>
    </location>
</feature>
<feature type="compositionally biased region" description="Pro residues" evidence="5">
    <location>
        <begin position="751"/>
        <end position="760"/>
    </location>
</feature>
<feature type="compositionally biased region" description="Acidic residues" evidence="5">
    <location>
        <begin position="779"/>
        <end position="788"/>
    </location>
</feature>
<feature type="compositionally biased region" description="Polar residues" evidence="5">
    <location>
        <begin position="806"/>
        <end position="818"/>
    </location>
</feature>
<feature type="compositionally biased region" description="Polar residues" evidence="5">
    <location>
        <begin position="833"/>
        <end position="853"/>
    </location>
</feature>
<feature type="compositionally biased region" description="Low complexity" evidence="5">
    <location>
        <begin position="963"/>
        <end position="974"/>
    </location>
</feature>
<feature type="active site" description="Nucleophile" evidence="3 4">
    <location>
        <position position="177"/>
    </location>
</feature>
<feature type="active site" description="Proton acceptor" evidence="3 4">
    <location>
        <position position="416"/>
    </location>
</feature>
<feature type="modified residue" description="Phosphoserine" evidence="1">
    <location>
        <position position="490"/>
    </location>
</feature>
<feature type="modified residue" description="Phosphoserine" evidence="1">
    <location>
        <position position="492"/>
    </location>
</feature>
<feature type="modified residue" description="Phosphothreonine" evidence="1">
    <location>
        <position position="632"/>
    </location>
</feature>
<feature type="modified residue" description="Phosphothreonine" evidence="1">
    <location>
        <position position="636"/>
    </location>
</feature>
<feature type="modified residue" description="Phosphoserine" evidence="1">
    <location>
        <position position="646"/>
    </location>
</feature>
<feature type="modified residue" description="Phosphoserine" evidence="1">
    <location>
        <position position="648"/>
    </location>
</feature>
<feature type="modified residue" description="Phosphoserine" evidence="1">
    <location>
        <position position="721"/>
    </location>
</feature>
<feature type="modified residue" description="Phosphoserine" evidence="1">
    <location>
        <position position="753"/>
    </location>
</feature>
<feature type="modified residue" description="Phosphothreonine" evidence="1">
    <location>
        <position position="756"/>
    </location>
</feature>
<feature type="modified residue" description="Phosphoserine" evidence="1">
    <location>
        <position position="759"/>
    </location>
</feature>
<feature type="modified residue" description="Phosphothreonine" evidence="1">
    <location>
        <position position="799"/>
    </location>
</feature>
<feature type="modified residue" description="Phosphoserine" evidence="1">
    <location>
        <position position="817"/>
    </location>
</feature>
<feature type="modified residue" description="Phosphothreonine" evidence="1">
    <location>
        <position position="820"/>
    </location>
</feature>
<sequence length="1059" mass="115591">MPVSMAVCETANVVNAALRESLGGNSSAGSSTDQAKSGEDTNGSLQNHIVANAKRILMAKIEYEEVPNYHESVLENLKSKYIVIKPGNPGAINGFSGKNNTGKLVGANGHDNNGARKQAEHPNNQSHHNHPHPTSNPNELPKPKRVLYPRENIRIGWKQSERKWQVGTGMINVGNTCYLNSTLQALLHIPALANWLVSEQAHLADCNVAEPGSGCIICAMAKTLLATQSNQSAVRPFLIYSKLKQICKHMVVGRQEDAHEFLRFLVEAMERAYLMRFRNYKELDQLVKETTPLGQIFGGYLRSEVRCLSCNHVSITFQHFQDLLLDIRKADSLEDAFEGHFSRERLEDMGYKCEGCKKKLKRFSMIGNKLTKQISFKPRIDLSKYAARSPAAQAQPLTYRLVSMVTHLGASQHCGHYTAIGSTDTGSFYNFDDSYVRPITMQNVCNTNAYIMFFELDLSQAASPPANRPNGVRLTNGHSTTPVPAATVSSPSPTRFIGPQLPPGGANGYTNGNAQKTAIQFKQQNQQNGLQLGTGKFQDTAKPPLVGAYAKGEATSAPTANGNKSSSPSSNSSSNHKSINQQQYLPISSDDEDIDDEMKPGPTTAQLPSMPNMTEDNTEPKAKSPVKIHLKTPVKTPLKSLVPYESASEEEEAPLPNPRQSPGGEDFSESDQESGQTNGHSKTNGSLTNGSASSSVHVNNSKQKTDAIDEIFKSLKKSADSEEDDDEEEPSIQLTNGWHPQKQSQSQSKAPPSPKTPPSPAVIKSKTGIWKVTRKDEVDAIDDDDDAVVVEGAPVKIPTPNKTHRNPFSSSKPSTDSPATPGAKRQKLLNGSALKSHQQPRVGNGYQSNVTSNGSTVNELLKQSYRGYGASVLSWNGKPAELEKEPFELVCAKRIAGHGSVEGSDIVEGSVAVDAAVTSSSNSNDVVVIAVALLVDAREQRQRDLDDDEENEMDRGRQRKVKSGSAKGNNASNSTPGYNPFQEYEGQKRWNKNGGGGGFSRFYNQNYRQNFQQRNKFKFNRFGGAGSAKFQQQRALQRHLSAGGGFSRRQPSAQQQQQT</sequence>
<keyword id="KW-0378">Hydrolase</keyword>
<keyword id="KW-0539">Nucleus</keyword>
<keyword id="KW-0597">Phosphoprotein</keyword>
<keyword id="KW-0645">Protease</keyword>
<keyword id="KW-1185">Reference proteome</keyword>
<keyword id="KW-0788">Thiol protease</keyword>
<keyword id="KW-0833">Ubl conjugation pathway</keyword>
<comment type="function">
    <text evidence="2">Required for maintaining multiple types of adult stem cells, including male and female germline, epithelial follicle cell and intestinal stem cells. May function as a transcriptional repressor by continually deubiquiting histone H2B at the promoters of genes critical for cellular differentiation, thereby preventing histone H3 'Lys-4' trimethylation (H3K4). Controls selective autophagy activation by ubiquitinated proteins.</text>
</comment>
<comment type="catalytic activity">
    <reaction>
        <text>Thiol-dependent hydrolysis of ester, thioester, amide, peptide and isopeptide bonds formed by the C-terminal Gly of ubiquitin (a 76-residue protein attached to proteins as an intracellular targeting signal).</text>
        <dbReference type="EC" id="3.4.19.12"/>
    </reaction>
</comment>
<comment type="subunit">
    <text evidence="1">Interacts with atms/PAF1, but not with CycT.</text>
</comment>
<comment type="subcellular location">
    <subcellularLocation>
        <location evidence="1">Nucleus</location>
        <location evidence="1">Nucleolus</location>
    </subcellularLocation>
</comment>
<comment type="similarity">
    <text evidence="6">Belongs to the peptidase C19 family.</text>
</comment>
<organism>
    <name type="scientific">Drosophila sechellia</name>
    <name type="common">Fruit fly</name>
    <dbReference type="NCBI Taxonomy" id="7238"/>
    <lineage>
        <taxon>Eukaryota</taxon>
        <taxon>Metazoa</taxon>
        <taxon>Ecdysozoa</taxon>
        <taxon>Arthropoda</taxon>
        <taxon>Hexapoda</taxon>
        <taxon>Insecta</taxon>
        <taxon>Pterygota</taxon>
        <taxon>Neoptera</taxon>
        <taxon>Endopterygota</taxon>
        <taxon>Diptera</taxon>
        <taxon>Brachycera</taxon>
        <taxon>Muscomorpha</taxon>
        <taxon>Ephydroidea</taxon>
        <taxon>Drosophilidae</taxon>
        <taxon>Drosophila</taxon>
        <taxon>Sophophora</taxon>
    </lineage>
</organism>
<proteinExistence type="inferred from homology"/>
<protein>
    <recommendedName>
        <fullName>Ubiquitin carboxyl-terminal hydrolase 36</fullName>
        <ecNumber>3.4.19.12</ecNumber>
    </recommendedName>
    <alternativeName>
        <fullName>Deubiquitinating enzyme 36</fullName>
    </alternativeName>
    <alternativeName>
        <fullName>Protein scrawny</fullName>
    </alternativeName>
    <alternativeName>
        <fullName>Ubiquitin thioesterase 36</fullName>
    </alternativeName>
    <alternativeName>
        <fullName>Ubiquitin-specific-processing protease 36</fullName>
    </alternativeName>
</protein>
<dbReference type="EC" id="3.4.19.12"/>
<dbReference type="EMBL" id="CH480817">
    <property type="protein sequence ID" value="EDW50606.1"/>
    <property type="molecule type" value="Genomic_DNA"/>
</dbReference>
<dbReference type="RefSeq" id="XP_002035470.1">
    <property type="nucleotide sequence ID" value="XM_002035434.1"/>
</dbReference>
<dbReference type="SMR" id="B4HUI5"/>
<dbReference type="STRING" id="7238.B4HUI5"/>
<dbReference type="EnsemblMetazoa" id="FBtr0197704">
    <property type="protein sequence ID" value="FBpp0196196"/>
    <property type="gene ID" value="FBgn0169640"/>
</dbReference>
<dbReference type="HOGENOM" id="CLU_006208_0_0_1"/>
<dbReference type="OMA" id="VCAMAKT"/>
<dbReference type="PhylomeDB" id="B4HUI5"/>
<dbReference type="ChiTaRS" id="scny">
    <property type="organism name" value="fly"/>
</dbReference>
<dbReference type="Proteomes" id="UP000001292">
    <property type="component" value="Unassembled WGS sequence"/>
</dbReference>
<dbReference type="GO" id="GO:0005829">
    <property type="term" value="C:cytosol"/>
    <property type="evidence" value="ECO:0007669"/>
    <property type="project" value="TreeGrafter"/>
</dbReference>
<dbReference type="GO" id="GO:0005730">
    <property type="term" value="C:nucleolus"/>
    <property type="evidence" value="ECO:0000250"/>
    <property type="project" value="UniProtKB"/>
</dbReference>
<dbReference type="GO" id="GO:0004843">
    <property type="term" value="F:cysteine-type deubiquitinase activity"/>
    <property type="evidence" value="ECO:0000250"/>
    <property type="project" value="UniProtKB"/>
</dbReference>
<dbReference type="GO" id="GO:0061578">
    <property type="term" value="F:K63-linked deubiquitinase activity"/>
    <property type="evidence" value="ECO:0007669"/>
    <property type="project" value="EnsemblMetazoa"/>
</dbReference>
<dbReference type="GO" id="GO:0030718">
    <property type="term" value="P:germ-line stem cell population maintenance"/>
    <property type="evidence" value="ECO:0000250"/>
    <property type="project" value="UniProtKB"/>
</dbReference>
<dbReference type="GO" id="GO:0031507">
    <property type="term" value="P:heterochromatin formation"/>
    <property type="evidence" value="ECO:0007669"/>
    <property type="project" value="EnsemblMetazoa"/>
</dbReference>
<dbReference type="GO" id="GO:0002785">
    <property type="term" value="P:negative regulation of antimicrobial peptide production"/>
    <property type="evidence" value="ECO:0007669"/>
    <property type="project" value="EnsemblMetazoa"/>
</dbReference>
<dbReference type="GO" id="GO:0045824">
    <property type="term" value="P:negative regulation of innate immune response"/>
    <property type="evidence" value="ECO:0007669"/>
    <property type="project" value="EnsemblMetazoa"/>
</dbReference>
<dbReference type="GO" id="GO:0016242">
    <property type="term" value="P:negative regulation of macroautophagy"/>
    <property type="evidence" value="ECO:0000250"/>
    <property type="project" value="UniProtKB"/>
</dbReference>
<dbReference type="GO" id="GO:0061060">
    <property type="term" value="P:negative regulation of peptidoglycan recognition protein signaling pathway"/>
    <property type="evidence" value="ECO:0007669"/>
    <property type="project" value="EnsemblMetazoa"/>
</dbReference>
<dbReference type="GO" id="GO:1901800">
    <property type="term" value="P:positive regulation of proteasomal protein catabolic process"/>
    <property type="evidence" value="ECO:0007669"/>
    <property type="project" value="EnsemblMetazoa"/>
</dbReference>
<dbReference type="GO" id="GO:0016579">
    <property type="term" value="P:protein deubiquitination"/>
    <property type="evidence" value="ECO:0000250"/>
    <property type="project" value="UniProtKB"/>
</dbReference>
<dbReference type="GO" id="GO:0006508">
    <property type="term" value="P:proteolysis"/>
    <property type="evidence" value="ECO:0007669"/>
    <property type="project" value="UniProtKB-KW"/>
</dbReference>
<dbReference type="GO" id="GO:0042981">
    <property type="term" value="P:regulation of apoptotic process"/>
    <property type="evidence" value="ECO:0007669"/>
    <property type="project" value="EnsemblMetazoa"/>
</dbReference>
<dbReference type="GO" id="GO:0035019">
    <property type="term" value="P:somatic stem cell population maintenance"/>
    <property type="evidence" value="ECO:0000250"/>
    <property type="project" value="UniProtKB"/>
</dbReference>
<dbReference type="CDD" id="cd02661">
    <property type="entry name" value="Peptidase_C19E"/>
    <property type="match status" value="1"/>
</dbReference>
<dbReference type="FunFam" id="3.90.70.10:FF:000119">
    <property type="entry name" value="Ubiquitin specific peptidase 36"/>
    <property type="match status" value="1"/>
</dbReference>
<dbReference type="Gene3D" id="3.90.70.10">
    <property type="entry name" value="Cysteine proteinases"/>
    <property type="match status" value="1"/>
</dbReference>
<dbReference type="InterPro" id="IPR038765">
    <property type="entry name" value="Papain-like_cys_pep_sf"/>
</dbReference>
<dbReference type="InterPro" id="IPR050164">
    <property type="entry name" value="Peptidase_C19"/>
</dbReference>
<dbReference type="InterPro" id="IPR001394">
    <property type="entry name" value="Peptidase_C19_UCH"/>
</dbReference>
<dbReference type="InterPro" id="IPR018200">
    <property type="entry name" value="USP_CS"/>
</dbReference>
<dbReference type="InterPro" id="IPR028889">
    <property type="entry name" value="USP_dom"/>
</dbReference>
<dbReference type="PANTHER" id="PTHR24006">
    <property type="entry name" value="UBIQUITIN CARBOXYL-TERMINAL HYDROLASE"/>
    <property type="match status" value="1"/>
</dbReference>
<dbReference type="PANTHER" id="PTHR24006:SF758">
    <property type="entry name" value="UBIQUITIN CARBOXYL-TERMINAL HYDROLASE 36"/>
    <property type="match status" value="1"/>
</dbReference>
<dbReference type="Pfam" id="PF00443">
    <property type="entry name" value="UCH"/>
    <property type="match status" value="1"/>
</dbReference>
<dbReference type="SUPFAM" id="SSF54001">
    <property type="entry name" value="Cysteine proteinases"/>
    <property type="match status" value="1"/>
</dbReference>
<dbReference type="PROSITE" id="PS00972">
    <property type="entry name" value="USP_1"/>
    <property type="match status" value="1"/>
</dbReference>
<dbReference type="PROSITE" id="PS00973">
    <property type="entry name" value="USP_2"/>
    <property type="match status" value="1"/>
</dbReference>
<dbReference type="PROSITE" id="PS50235">
    <property type="entry name" value="USP_3"/>
    <property type="match status" value="1"/>
</dbReference>
<gene>
    <name type="primary">Usp36</name>
    <name type="synonym">scny</name>
    <name type="ORF">GM14719</name>
</gene>
<accession>B4HUI5</accession>
<reference key="1">
    <citation type="journal article" date="2007" name="Nature">
        <title>Evolution of genes and genomes on the Drosophila phylogeny.</title>
        <authorList>
            <consortium name="Drosophila 12 genomes consortium"/>
        </authorList>
    </citation>
    <scope>NUCLEOTIDE SEQUENCE [LARGE SCALE GENOMIC DNA]</scope>
    <source>
        <strain>Rob3c / Tucson 14021-0248.25</strain>
    </source>
</reference>
<evidence type="ECO:0000250" key="1"/>
<evidence type="ECO:0000250" key="2">
    <source>
        <dbReference type="UniProtKB" id="Q9VRP5"/>
    </source>
</evidence>
<evidence type="ECO:0000255" key="3">
    <source>
        <dbReference type="PROSITE-ProRule" id="PRU10092"/>
    </source>
</evidence>
<evidence type="ECO:0000255" key="4">
    <source>
        <dbReference type="PROSITE-ProRule" id="PRU10093"/>
    </source>
</evidence>
<evidence type="ECO:0000256" key="5">
    <source>
        <dbReference type="SAM" id="MobiDB-lite"/>
    </source>
</evidence>
<evidence type="ECO:0000305" key="6"/>
<name>UBP36_DROSE</name>